<organism>
    <name type="scientific">Lactococcus lactis subsp. cremoris (strain SK11)</name>
    <dbReference type="NCBI Taxonomy" id="272622"/>
    <lineage>
        <taxon>Bacteria</taxon>
        <taxon>Bacillati</taxon>
        <taxon>Bacillota</taxon>
        <taxon>Bacilli</taxon>
        <taxon>Lactobacillales</taxon>
        <taxon>Streptococcaceae</taxon>
        <taxon>Lactococcus</taxon>
        <taxon>Lactococcus cremoris subsp. cremoris</taxon>
    </lineage>
</organism>
<keyword id="KW-0963">Cytoplasm</keyword>
<keyword id="KW-0229">DNA integration</keyword>
<keyword id="KW-0233">DNA recombination</keyword>
<keyword id="KW-0238">DNA-binding</keyword>
<comment type="function">
    <text evidence="1">Putative tyrosine recombinase. Not involved in the cutting and rejoining of the recombining DNA molecules on dif(SL) site.</text>
</comment>
<comment type="subcellular location">
    <subcellularLocation>
        <location evidence="1">Cytoplasm</location>
    </subcellularLocation>
</comment>
<comment type="similarity">
    <text evidence="1">Belongs to the 'phage' integrase family. XerD-like subfamily.</text>
</comment>
<comment type="sequence caution" evidence="4">
    <conflict type="erroneous initiation">
        <sequence resource="EMBL-CDS" id="ABJ72915"/>
    </conflict>
</comment>
<proteinExistence type="inferred from homology"/>
<feature type="chain" id="PRO_0000355188" description="Tyrosine recombinase XerD-like">
    <location>
        <begin position="1"/>
        <end position="238"/>
    </location>
</feature>
<feature type="domain" description="Core-binding (CB)" evidence="3">
    <location>
        <begin position="1"/>
        <end position="75"/>
    </location>
</feature>
<feature type="domain" description="Tyr recombinase" evidence="2">
    <location>
        <begin position="90"/>
        <end position="238"/>
    </location>
</feature>
<feature type="active site" evidence="2">
    <location>
        <position position="154"/>
    </location>
</feature>
<feature type="active site" evidence="2">
    <location>
        <position position="204"/>
    </location>
</feature>
<feature type="active site" description="O-(3'-phospho-DNA)-tyrosine intermediate" evidence="2">
    <location>
        <position position="236"/>
    </location>
</feature>
<accession>Q02YQ7</accession>
<evidence type="ECO:0000255" key="1">
    <source>
        <dbReference type="HAMAP-Rule" id="MF_01817"/>
    </source>
</evidence>
<evidence type="ECO:0000255" key="2">
    <source>
        <dbReference type="PROSITE-ProRule" id="PRU01246"/>
    </source>
</evidence>
<evidence type="ECO:0000255" key="3">
    <source>
        <dbReference type="PROSITE-ProRule" id="PRU01248"/>
    </source>
</evidence>
<evidence type="ECO:0000305" key="4"/>
<sequence>MKLPNEIEEYLVSRNFSENTRSNYYYDLVYLQAFFEDKSVTQEALELYKHQLSKLSPAAQRRKISSANQYFLFLYENKKINQFFKIKQVVQKKTQSSESYHPMIKEFPEFYGPLSCPGQFLALLILEFGLNFAEIQKLKWENFNWNFKYLTIEKAGIKRVLPIREKFAIRVKAIKNADELFAKSRQFLYTELKKFTNYSSKEIREQYILHQVKAGKTIYELANLLGLSTITALEKYYR</sequence>
<name>XERDL_LACLS</name>
<dbReference type="EMBL" id="CP000425">
    <property type="protein sequence ID" value="ABJ72915.1"/>
    <property type="status" value="ALT_INIT"/>
    <property type="molecule type" value="Genomic_DNA"/>
</dbReference>
<dbReference type="RefSeq" id="WP_041167458.1">
    <property type="nucleotide sequence ID" value="NC_008527.1"/>
</dbReference>
<dbReference type="SMR" id="Q02YQ7"/>
<dbReference type="KEGG" id="llc:LACR_1399"/>
<dbReference type="HOGENOM" id="CLU_1128554_0_0_9"/>
<dbReference type="Proteomes" id="UP000000240">
    <property type="component" value="Chromosome"/>
</dbReference>
<dbReference type="GO" id="GO:0005737">
    <property type="term" value="C:cytoplasm"/>
    <property type="evidence" value="ECO:0007669"/>
    <property type="project" value="UniProtKB-SubCell"/>
</dbReference>
<dbReference type="GO" id="GO:0003677">
    <property type="term" value="F:DNA binding"/>
    <property type="evidence" value="ECO:0007669"/>
    <property type="project" value="UniProtKB-KW"/>
</dbReference>
<dbReference type="GO" id="GO:0009037">
    <property type="term" value="F:tyrosine-based site-specific recombinase activity"/>
    <property type="evidence" value="ECO:0007669"/>
    <property type="project" value="UniProtKB-UniRule"/>
</dbReference>
<dbReference type="GO" id="GO:0006313">
    <property type="term" value="P:DNA transposition"/>
    <property type="evidence" value="ECO:0007669"/>
    <property type="project" value="UniProtKB-UniRule"/>
</dbReference>
<dbReference type="CDD" id="cd01190">
    <property type="entry name" value="INT_StrepXerD_C_like"/>
    <property type="match status" value="1"/>
</dbReference>
<dbReference type="Gene3D" id="1.10.150.130">
    <property type="match status" value="1"/>
</dbReference>
<dbReference type="Gene3D" id="1.10.443.10">
    <property type="entry name" value="Intergrase catalytic core"/>
    <property type="match status" value="1"/>
</dbReference>
<dbReference type="HAMAP" id="MF_01817">
    <property type="entry name" value="Recomb_XerD_like"/>
    <property type="match status" value="1"/>
</dbReference>
<dbReference type="InterPro" id="IPR044068">
    <property type="entry name" value="CB"/>
</dbReference>
<dbReference type="InterPro" id="IPR011010">
    <property type="entry name" value="DNA_brk_join_enz"/>
</dbReference>
<dbReference type="InterPro" id="IPR013762">
    <property type="entry name" value="Integrase-like_cat_sf"/>
</dbReference>
<dbReference type="InterPro" id="IPR002104">
    <property type="entry name" value="Integrase_catalytic"/>
</dbReference>
<dbReference type="InterPro" id="IPR010998">
    <property type="entry name" value="Integrase_recombinase_N"/>
</dbReference>
<dbReference type="InterPro" id="IPR020876">
    <property type="entry name" value="Tyrosine_recombinase_XerD-like"/>
</dbReference>
<dbReference type="NCBIfam" id="NF002685">
    <property type="entry name" value="PRK02436.1"/>
    <property type="match status" value="1"/>
</dbReference>
<dbReference type="SUPFAM" id="SSF56349">
    <property type="entry name" value="DNA breaking-rejoining enzymes"/>
    <property type="match status" value="1"/>
</dbReference>
<dbReference type="PROSITE" id="PS51900">
    <property type="entry name" value="CB"/>
    <property type="match status" value="1"/>
</dbReference>
<dbReference type="PROSITE" id="PS51898">
    <property type="entry name" value="TYR_RECOMBINASE"/>
    <property type="match status" value="1"/>
</dbReference>
<reference key="1">
    <citation type="journal article" date="2006" name="Proc. Natl. Acad. Sci. U.S.A.">
        <title>Comparative genomics of the lactic acid bacteria.</title>
        <authorList>
            <person name="Makarova K.S."/>
            <person name="Slesarev A."/>
            <person name="Wolf Y.I."/>
            <person name="Sorokin A."/>
            <person name="Mirkin B."/>
            <person name="Koonin E.V."/>
            <person name="Pavlov A."/>
            <person name="Pavlova N."/>
            <person name="Karamychev V."/>
            <person name="Polouchine N."/>
            <person name="Shakhova V."/>
            <person name="Grigoriev I."/>
            <person name="Lou Y."/>
            <person name="Rohksar D."/>
            <person name="Lucas S."/>
            <person name="Huang K."/>
            <person name="Goodstein D.M."/>
            <person name="Hawkins T."/>
            <person name="Plengvidhya V."/>
            <person name="Welker D."/>
            <person name="Hughes J."/>
            <person name="Goh Y."/>
            <person name="Benson A."/>
            <person name="Baldwin K."/>
            <person name="Lee J.-H."/>
            <person name="Diaz-Muniz I."/>
            <person name="Dosti B."/>
            <person name="Smeianov V."/>
            <person name="Wechter W."/>
            <person name="Barabote R."/>
            <person name="Lorca G."/>
            <person name="Altermann E."/>
            <person name="Barrangou R."/>
            <person name="Ganesan B."/>
            <person name="Xie Y."/>
            <person name="Rawsthorne H."/>
            <person name="Tamir D."/>
            <person name="Parker C."/>
            <person name="Breidt F."/>
            <person name="Broadbent J.R."/>
            <person name="Hutkins R."/>
            <person name="O'Sullivan D."/>
            <person name="Steele J."/>
            <person name="Unlu G."/>
            <person name="Saier M.H. Jr."/>
            <person name="Klaenhammer T."/>
            <person name="Richardson P."/>
            <person name="Kozyavkin S."/>
            <person name="Weimer B.C."/>
            <person name="Mills D.A."/>
        </authorList>
    </citation>
    <scope>NUCLEOTIDE SEQUENCE [LARGE SCALE GENOMIC DNA]</scope>
    <source>
        <strain>SK11</strain>
    </source>
</reference>
<gene>
    <name type="ordered locus">LACR_1399</name>
</gene>
<protein>
    <recommendedName>
        <fullName evidence="1">Tyrosine recombinase XerD-like</fullName>
    </recommendedName>
</protein>